<accession>Q46BL0</accession>
<protein>
    <recommendedName>
        <fullName>S-adenosyl-L-methionine-dependent uroporphyrinogen III methyltransferase</fullName>
        <shortName>Mba_SUMT</shortName>
        <shortName>SUMT</shortName>
        <ecNumber>2.1.1.107</ecNumber>
    </recommendedName>
    <alternativeName>
        <fullName>Uroporphyrinogen-III C-methyltransferase</fullName>
    </alternativeName>
</protein>
<evidence type="ECO:0000250" key="1">
    <source>
        <dbReference type="UniProtKB" id="P21631"/>
    </source>
</evidence>
<evidence type="ECO:0000269" key="2">
    <source>
    </source>
</evidence>
<evidence type="ECO:0000305" key="3"/>
<dbReference type="EC" id="2.1.1.107"/>
<dbReference type="EMBL" id="CP000099">
    <property type="protein sequence ID" value="AAZ70732.1"/>
    <property type="molecule type" value="Genomic_DNA"/>
</dbReference>
<dbReference type="SMR" id="Q46BL0"/>
<dbReference type="STRING" id="269797.Mbar_A1791"/>
<dbReference type="PaxDb" id="269797-Mbar_A1791"/>
<dbReference type="KEGG" id="mba:Mbar_A1791"/>
<dbReference type="eggNOG" id="arCOG00644">
    <property type="taxonomic scope" value="Archaea"/>
</dbReference>
<dbReference type="HOGENOM" id="CLU_011276_7_0_2"/>
<dbReference type="OrthoDB" id="24444at2157"/>
<dbReference type="UniPathway" id="UPA00262">
    <property type="reaction ID" value="UER00211"/>
</dbReference>
<dbReference type="GO" id="GO:0004851">
    <property type="term" value="F:uroporphyrin-III C-methyltransferase activity"/>
    <property type="evidence" value="ECO:0000314"/>
    <property type="project" value="UniProtKB"/>
</dbReference>
<dbReference type="GO" id="GO:0032259">
    <property type="term" value="P:methylation"/>
    <property type="evidence" value="ECO:0007669"/>
    <property type="project" value="UniProtKB-KW"/>
</dbReference>
<dbReference type="GO" id="GO:0019354">
    <property type="term" value="P:siroheme biosynthetic process"/>
    <property type="evidence" value="ECO:0000314"/>
    <property type="project" value="UniProtKB"/>
</dbReference>
<dbReference type="CDD" id="cd11642">
    <property type="entry name" value="SUMT"/>
    <property type="match status" value="1"/>
</dbReference>
<dbReference type="FunFam" id="3.30.950.10:FF:000001">
    <property type="entry name" value="Siroheme synthase"/>
    <property type="match status" value="1"/>
</dbReference>
<dbReference type="FunFam" id="3.40.1010.10:FF:000001">
    <property type="entry name" value="Siroheme synthase"/>
    <property type="match status" value="1"/>
</dbReference>
<dbReference type="Gene3D" id="3.40.1010.10">
    <property type="entry name" value="Cobalt-precorrin-4 Transmethylase, Domain 1"/>
    <property type="match status" value="1"/>
</dbReference>
<dbReference type="Gene3D" id="3.30.950.10">
    <property type="entry name" value="Methyltransferase, Cobalt-precorrin-4 Transmethylase, Domain 2"/>
    <property type="match status" value="1"/>
</dbReference>
<dbReference type="InterPro" id="IPR000878">
    <property type="entry name" value="4pyrrol_Mease"/>
</dbReference>
<dbReference type="InterPro" id="IPR035996">
    <property type="entry name" value="4pyrrol_Methylase_sf"/>
</dbReference>
<dbReference type="InterPro" id="IPR014777">
    <property type="entry name" value="4pyrrole_Mease_sub1"/>
</dbReference>
<dbReference type="InterPro" id="IPR014776">
    <property type="entry name" value="4pyrrole_Mease_sub2"/>
</dbReference>
<dbReference type="InterPro" id="IPR006366">
    <property type="entry name" value="CobA/CysG_C"/>
</dbReference>
<dbReference type="InterPro" id="IPR050161">
    <property type="entry name" value="Siro_Cobalamin_biosynth"/>
</dbReference>
<dbReference type="InterPro" id="IPR003043">
    <property type="entry name" value="Uropor_MeTrfase_CS"/>
</dbReference>
<dbReference type="NCBIfam" id="TIGR01469">
    <property type="entry name" value="cobA_cysG_Cterm"/>
    <property type="match status" value="1"/>
</dbReference>
<dbReference type="NCBIfam" id="NF004790">
    <property type="entry name" value="PRK06136.1"/>
    <property type="match status" value="1"/>
</dbReference>
<dbReference type="PANTHER" id="PTHR45790:SF3">
    <property type="entry name" value="S-ADENOSYL-L-METHIONINE-DEPENDENT UROPORPHYRINOGEN III METHYLTRANSFERASE, CHLOROPLASTIC"/>
    <property type="match status" value="1"/>
</dbReference>
<dbReference type="PANTHER" id="PTHR45790">
    <property type="entry name" value="SIROHEME SYNTHASE-RELATED"/>
    <property type="match status" value="1"/>
</dbReference>
<dbReference type="Pfam" id="PF00590">
    <property type="entry name" value="TP_methylase"/>
    <property type="match status" value="1"/>
</dbReference>
<dbReference type="SUPFAM" id="SSF53790">
    <property type="entry name" value="Tetrapyrrole methylase"/>
    <property type="match status" value="1"/>
</dbReference>
<dbReference type="PROSITE" id="PS00839">
    <property type="entry name" value="SUMT_1"/>
    <property type="match status" value="1"/>
</dbReference>
<dbReference type="PROSITE" id="PS00840">
    <property type="entry name" value="SUMT_2"/>
    <property type="match status" value="1"/>
</dbReference>
<keyword id="KW-0489">Methyltransferase</keyword>
<keyword id="KW-0627">Porphyrin biosynthesis</keyword>
<keyword id="KW-0949">S-adenosyl-L-methionine</keyword>
<keyword id="KW-0808">Transferase</keyword>
<name>SUMT_METBF</name>
<organism>
    <name type="scientific">Methanosarcina barkeri (strain Fusaro / DSM 804)</name>
    <dbReference type="NCBI Taxonomy" id="269797"/>
    <lineage>
        <taxon>Archaea</taxon>
        <taxon>Methanobacteriati</taxon>
        <taxon>Methanobacteriota</taxon>
        <taxon>Stenosarchaea group</taxon>
        <taxon>Methanomicrobia</taxon>
        <taxon>Methanosarcinales</taxon>
        <taxon>Methanosarcinaceae</taxon>
        <taxon>Methanosarcina</taxon>
    </lineage>
</organism>
<comment type="function">
    <text evidence="2">Involved in the archaeal biosynthesis of heme. Catalyzes the methylation of carbons 2 and 7 of uroporphyrinogen-III (UROGEN) to yield precorrin-2. It does not catalyze the overmethylation of precorrin-2 to trimethylpyrrocorphin.</text>
</comment>
<comment type="catalytic activity">
    <reaction evidence="2">
        <text>uroporphyrinogen III + 2 S-adenosyl-L-methionine = precorrin-2 + 2 S-adenosyl-L-homocysteine + H(+)</text>
        <dbReference type="Rhea" id="RHEA:32459"/>
        <dbReference type="ChEBI" id="CHEBI:15378"/>
        <dbReference type="ChEBI" id="CHEBI:57308"/>
        <dbReference type="ChEBI" id="CHEBI:57856"/>
        <dbReference type="ChEBI" id="CHEBI:58827"/>
        <dbReference type="ChEBI" id="CHEBI:59789"/>
        <dbReference type="EC" id="2.1.1.107"/>
    </reaction>
</comment>
<comment type="pathway">
    <text>Porphyrin-containing compound metabolism; siroheme biosynthesis; precorrin-2 from uroporphyrinogen III: step 1/1.</text>
</comment>
<comment type="subunit">
    <text evidence="2">Homodimer.</text>
</comment>
<comment type="similarity">
    <text evidence="3">Belongs to the precorrin methyltransferase family.</text>
</comment>
<reference key="1">
    <citation type="journal article" date="2006" name="J. Bacteriol.">
        <title>The Methanosarcina barkeri genome: comparative analysis with Methanosarcina acetivorans and Methanosarcina mazei reveals extensive rearrangement within methanosarcinal genomes.</title>
        <authorList>
            <person name="Maeder D.L."/>
            <person name="Anderson I."/>
            <person name="Brettin T.S."/>
            <person name="Bruce D.C."/>
            <person name="Gilna P."/>
            <person name="Han C.S."/>
            <person name="Lapidus A."/>
            <person name="Metcalf W.W."/>
            <person name="Saunders E."/>
            <person name="Tapia R."/>
            <person name="Sowers K.R."/>
        </authorList>
    </citation>
    <scope>NUCLEOTIDE SEQUENCE [LARGE SCALE GENOMIC DNA]</scope>
    <source>
        <strain>Fusaro / DSM 804</strain>
    </source>
</reference>
<reference key="2">
    <citation type="journal article" date="2010" name="Archaea">
        <title>A novel pathway for the biosynthesis of heme in Archaea: genome-based bioinformatic predictions and experimental evidence.</title>
        <authorList>
            <person name="Storbeck S."/>
            <person name="Rolfes S."/>
            <person name="Raux-Deery E."/>
            <person name="Warren M.J."/>
            <person name="Jahn D."/>
            <person name="Layer G."/>
        </authorList>
    </citation>
    <scope>FUNCTION</scope>
    <scope>CATALYTIC ACTIVITY</scope>
    <scope>SUBUNIT</scope>
</reference>
<gene>
    <name type="ordered locus">Mbar_A1791</name>
</gene>
<proteinExistence type="evidence at protein level"/>
<sequence length="255" mass="27232">MSGNYGKVYLVGSGPGDPELLTLKARRLIDSAEVIVYDQLPGKAILDSMPASAEKINVGKYAGSHTMTQAEINEVLVQKAKEGKMVVRLKGGDPYVFGRGGEEAEVLVAEEIEFEVVPGITSAIAVPAYAGIPVTHRESTSMVTFITGHEDPTKEESGLDWETLAKFGGTIVILMGVKMLGRNAEELMKHGKAPDTPVAVIERGTRADQRVTVGTLANIASLAEERKVKAPAITVVGDVVHLHDILGEQRTGVDF</sequence>
<feature type="chain" id="PRO_0000428885" description="S-adenosyl-L-methionine-dependent uroporphyrinogen III methyltransferase">
    <location>
        <begin position="1"/>
        <end position="255"/>
    </location>
</feature>
<feature type="binding site" evidence="1">
    <location>
        <position position="15"/>
    </location>
    <ligand>
        <name>S-adenosyl-L-homocysteine</name>
        <dbReference type="ChEBI" id="CHEBI:57856"/>
    </ligand>
</feature>
<feature type="binding site" evidence="1">
    <location>
        <begin position="91"/>
        <end position="93"/>
    </location>
    <ligand>
        <name>S-adenosyl-L-homocysteine</name>
        <dbReference type="ChEBI" id="CHEBI:57856"/>
    </ligand>
</feature>
<feature type="binding site" evidence="1">
    <location>
        <begin position="121"/>
        <end position="122"/>
    </location>
    <ligand>
        <name>S-adenosyl-L-homocysteine</name>
        <dbReference type="ChEBI" id="CHEBI:57856"/>
    </ligand>
</feature>
<feature type="binding site" evidence="1">
    <location>
        <position position="175"/>
    </location>
    <ligand>
        <name>S-adenosyl-L-homocysteine</name>
        <dbReference type="ChEBI" id="CHEBI:57856"/>
    </ligand>
</feature>
<feature type="binding site" evidence="1">
    <location>
        <position position="232"/>
    </location>
    <ligand>
        <name>S-adenosyl-L-homocysteine</name>
        <dbReference type="ChEBI" id="CHEBI:57856"/>
    </ligand>
</feature>